<keyword id="KW-1003">Cell membrane</keyword>
<keyword id="KW-0297">G-protein coupled receptor</keyword>
<keyword id="KW-0325">Glycoprotein</keyword>
<keyword id="KW-0449">Lipoprotein</keyword>
<keyword id="KW-0472">Membrane</keyword>
<keyword id="KW-0564">Palmitate</keyword>
<keyword id="KW-0675">Receptor</keyword>
<keyword id="KW-0807">Transducer</keyword>
<keyword id="KW-0812">Transmembrane</keyword>
<keyword id="KW-1133">Transmembrane helix</keyword>
<organism>
    <name type="scientific">Saguinus oedipus</name>
    <name type="common">Cotton-top tamarin</name>
    <dbReference type="NCBI Taxonomy" id="9490"/>
    <lineage>
        <taxon>Eukaryota</taxon>
        <taxon>Metazoa</taxon>
        <taxon>Chordata</taxon>
        <taxon>Craniata</taxon>
        <taxon>Vertebrata</taxon>
        <taxon>Euteleostomi</taxon>
        <taxon>Mammalia</taxon>
        <taxon>Eutheria</taxon>
        <taxon>Euarchontoglires</taxon>
        <taxon>Primates</taxon>
        <taxon>Haplorrhini</taxon>
        <taxon>Platyrrhini</taxon>
        <taxon>Cebidae</taxon>
        <taxon>Callitrichinae</taxon>
        <taxon>Saguinus</taxon>
    </lineage>
</organism>
<gene>
    <name type="primary">MC1R</name>
</gene>
<evidence type="ECO:0000250" key="1">
    <source>
        <dbReference type="UniProtKB" id="Q01726"/>
    </source>
</evidence>
<evidence type="ECO:0000255" key="2"/>
<evidence type="ECO:0000255" key="3">
    <source>
        <dbReference type="PROSITE-ProRule" id="PRU00521"/>
    </source>
</evidence>
<accession>Q864H2</accession>
<accession>A3KFA9</accession>
<protein>
    <recommendedName>
        <fullName>Melanocyte-stimulating hormone receptor</fullName>
        <shortName>MSH-R</shortName>
    </recommendedName>
    <alternativeName>
        <fullName>Melanocortin receptor 1</fullName>
        <shortName>MC1-R</shortName>
    </alternativeName>
</protein>
<reference key="1">
    <citation type="journal article" date="2003" name="Am. J. Phys. Anthropol.">
        <title>Evolution of a pigmentation gene, the melanocortin-1 receptor, in primates.</title>
        <authorList>
            <person name="Mundy N.I."/>
            <person name="Kelly J."/>
        </authorList>
    </citation>
    <scope>NUCLEOTIDE SEQUENCE [GENOMIC DNA]</scope>
    <source>
        <strain>Isolate 296</strain>
    </source>
</reference>
<reference key="2">
    <citation type="journal article" date="2008" name="Am. J. Primatol.">
        <title>Variation of the melanocortin 1 receptor gene in the macaques.</title>
        <authorList>
            <person name="Nakayama K."/>
            <person name="Shotake T."/>
            <person name="Takeneka O."/>
            <person name="Ishida T."/>
        </authorList>
    </citation>
    <scope>NUCLEOTIDE SEQUENCE [GENOMIC DNA]</scope>
</reference>
<dbReference type="EMBL" id="AY205125">
    <property type="protein sequence ID" value="AAP30999.1"/>
    <property type="molecule type" value="Genomic_DNA"/>
</dbReference>
<dbReference type="EMBL" id="AB296240">
    <property type="protein sequence ID" value="BAF48472.1"/>
    <property type="molecule type" value="Genomic_DNA"/>
</dbReference>
<dbReference type="SMR" id="Q864H2"/>
<dbReference type="GlyCosmos" id="Q864H2">
    <property type="glycosylation" value="1 site, No reported glycans"/>
</dbReference>
<dbReference type="GO" id="GO:0005886">
    <property type="term" value="C:plasma membrane"/>
    <property type="evidence" value="ECO:0000250"/>
    <property type="project" value="UniProtKB"/>
</dbReference>
<dbReference type="GO" id="GO:0004980">
    <property type="term" value="F:melanocyte-stimulating hormone receptor activity"/>
    <property type="evidence" value="ECO:0007669"/>
    <property type="project" value="InterPro"/>
</dbReference>
<dbReference type="GO" id="GO:0007189">
    <property type="term" value="P:adenylate cyclase-activating G protein-coupled receptor signaling pathway"/>
    <property type="evidence" value="ECO:0007669"/>
    <property type="project" value="UniProtKB-ARBA"/>
</dbReference>
<dbReference type="FunFam" id="1.20.1070.10:FF:000211">
    <property type="entry name" value="Melanocyte-stimulating hormone receptor"/>
    <property type="match status" value="1"/>
</dbReference>
<dbReference type="Gene3D" id="1.20.1070.10">
    <property type="entry name" value="Rhodopsin 7-helix transmembrane proteins"/>
    <property type="match status" value="1"/>
</dbReference>
<dbReference type="InterPro" id="IPR000276">
    <property type="entry name" value="GPCR_Rhodpsn"/>
</dbReference>
<dbReference type="InterPro" id="IPR017452">
    <property type="entry name" value="GPCR_Rhodpsn_7TM"/>
</dbReference>
<dbReference type="InterPro" id="IPR001671">
    <property type="entry name" value="Melcrt_ACTH_rcpt"/>
</dbReference>
<dbReference type="InterPro" id="IPR000761">
    <property type="entry name" value="MSH_rcpt"/>
</dbReference>
<dbReference type="PANTHER" id="PTHR22750">
    <property type="entry name" value="G-PROTEIN COUPLED RECEPTOR"/>
    <property type="match status" value="1"/>
</dbReference>
<dbReference type="Pfam" id="PF00001">
    <property type="entry name" value="7tm_1"/>
    <property type="match status" value="2"/>
</dbReference>
<dbReference type="PRINTS" id="PR00237">
    <property type="entry name" value="GPCRRHODOPSN"/>
</dbReference>
<dbReference type="PRINTS" id="PR00534">
    <property type="entry name" value="MCRFAMILY"/>
</dbReference>
<dbReference type="PRINTS" id="PR00536">
    <property type="entry name" value="MELNOCYTESHR"/>
</dbReference>
<dbReference type="SMART" id="SM01381">
    <property type="entry name" value="7TM_GPCR_Srsx"/>
    <property type="match status" value="1"/>
</dbReference>
<dbReference type="SUPFAM" id="SSF81321">
    <property type="entry name" value="Family A G protein-coupled receptor-like"/>
    <property type="match status" value="1"/>
</dbReference>
<dbReference type="PROSITE" id="PS00237">
    <property type="entry name" value="G_PROTEIN_RECEP_F1_1"/>
    <property type="match status" value="1"/>
</dbReference>
<dbReference type="PROSITE" id="PS50262">
    <property type="entry name" value="G_PROTEIN_RECEP_F1_2"/>
    <property type="match status" value="1"/>
</dbReference>
<sequence>MPMQGAQRKLLGSLNSTPTATSNLGLAANHTGAPCLEVSIPDGLFLSLGLVSLVENVLVVAAVAKNRNLHSSMYCFICCLALSDLLVSGSNMLETAVILLLETGALATRTSVVQQLHNTINVLTCSSMLCSLCFLGAIAVDRYISIFYALRYHSIMTLPRAQRAIAAIWVASVLSSTLFITYYDHAAVLLCLVVFFLAMLVLMAVLYVHMLARACQHAHGIIRLHKRQTPAHQGFGLRGAATLTILLGIFFLCWGPFFLHLTLVVFCPQHLTCSCIFKNFKVFLTLIICNTIIDPLIYAFRSQELRRTLKEVLLCSW</sequence>
<name>MSHR_SAGOE</name>
<proteinExistence type="inferred from homology"/>
<comment type="function">
    <text evidence="1">Receptor for MSH (alpha, beta and gamma) and ACTH. The activity of this receptor is mediated by G proteins which activate adenylate cyclase. Mediates melanogenesis, the production of eumelanin (black/brown) and phaeomelanin (red/yellow), via regulation of cAMP signaling in melanocytes.</text>
</comment>
<comment type="subunit">
    <text evidence="1">Interacts with MGRN1, but does not undergo MGRN1-mediated ubiquitination; this interaction competes with GNAS-binding and thus inhibits agonist-induced cAMP production. Interacts with OPN3; the interaction results in a decrease in MC1R-mediated cAMP signaling and ultimately a decrease in melanin production in melanocytes.</text>
</comment>
<comment type="subcellular location">
    <subcellularLocation>
        <location evidence="1">Cell membrane</location>
        <topology evidence="2">Multi-pass membrane protein</topology>
    </subcellularLocation>
</comment>
<comment type="similarity">
    <text evidence="3">Belongs to the G-protein coupled receptor 1 family.</text>
</comment>
<feature type="chain" id="PRO_0000069848" description="Melanocyte-stimulating hormone receptor">
    <location>
        <begin position="1"/>
        <end position="317"/>
    </location>
</feature>
<feature type="topological domain" description="Extracellular" evidence="2">
    <location>
        <begin position="1"/>
        <end position="37"/>
    </location>
</feature>
<feature type="transmembrane region" description="Helical; Name=1" evidence="2">
    <location>
        <begin position="38"/>
        <end position="63"/>
    </location>
</feature>
<feature type="topological domain" description="Cytoplasmic" evidence="2">
    <location>
        <begin position="64"/>
        <end position="72"/>
    </location>
</feature>
<feature type="transmembrane region" description="Helical; Name=2" evidence="2">
    <location>
        <begin position="73"/>
        <end position="93"/>
    </location>
</feature>
<feature type="topological domain" description="Extracellular" evidence="2">
    <location>
        <begin position="94"/>
        <end position="118"/>
    </location>
</feature>
<feature type="transmembrane region" description="Helical; Name=3" evidence="2">
    <location>
        <begin position="119"/>
        <end position="140"/>
    </location>
</feature>
<feature type="topological domain" description="Cytoplasmic" evidence="2">
    <location>
        <begin position="141"/>
        <end position="163"/>
    </location>
</feature>
<feature type="transmembrane region" description="Helical; Name=4" evidence="2">
    <location>
        <begin position="164"/>
        <end position="183"/>
    </location>
</feature>
<feature type="topological domain" description="Extracellular" evidence="2">
    <location>
        <begin position="184"/>
        <end position="191"/>
    </location>
</feature>
<feature type="transmembrane region" description="Helical; Name=5" evidence="2">
    <location>
        <begin position="192"/>
        <end position="211"/>
    </location>
</feature>
<feature type="topological domain" description="Cytoplasmic" evidence="2">
    <location>
        <begin position="212"/>
        <end position="240"/>
    </location>
</feature>
<feature type="transmembrane region" description="Helical; Name=6" evidence="2">
    <location>
        <begin position="241"/>
        <end position="266"/>
    </location>
</feature>
<feature type="topological domain" description="Extracellular" evidence="2">
    <location>
        <begin position="267"/>
        <end position="279"/>
    </location>
</feature>
<feature type="transmembrane region" description="Helical; Name=7" evidence="2">
    <location>
        <begin position="280"/>
        <end position="300"/>
    </location>
</feature>
<feature type="topological domain" description="Cytoplasmic" evidence="2">
    <location>
        <begin position="301"/>
        <end position="317"/>
    </location>
</feature>
<feature type="lipid moiety-binding region" description="S-palmitoyl cysteine" evidence="2">
    <location>
        <position position="315"/>
    </location>
</feature>
<feature type="glycosylation site" description="N-linked (GlcNAc...) asparagine" evidence="2">
    <location>
        <position position="29"/>
    </location>
</feature>